<sequence>MRQKTLDVLEFEKIKSLVANETISDLGLEKVNQMMPATNFETVVFQMEETDEIAQIYNKHRLPSLSGLSKVSAFIHRADIGGVLNVSELNLIKRLIQVQNQFKTFYNQLVEEDEGVKYPILDDKMNQLPVLTDLFQQINETCDTYDLYDNASYELQGIRSKISSTNQRIRQNLDRIVKSQANQKKLSDAIVTVRNERNVIPVKAEYRQDFNGIVHDQSASGQTLYIEPSSVVEMNNQISRLRHDEAIEKERILTQLTGYVAADKDALLVAEQVMGQLDFLIAKARYSRSIKGTKPIFKEDRTVYLPKAYHPLLNRETVVANTIEFMEDIETVIITGPNTGGKTVTLKTLGLIIVMAQSGLLIPTLDGSQLSVFKNVYCDIGDEQSIEQSLSTFSSHMTNIVEILKHADKHSLVLFDELGAGTDPSEGAALAMSILDHVRKIGSLVMATTHYPELKAYSYNREGVMNASVEFDVDTLSPTYKLLMGVPGRSNAFDISKKLGLSLNIINKAKTMIGTDEKEINEMIESLERNYKRVETQRLELDRLVKEAEQVHDDLSKQYQQFQNYEKSLIEEAKEKANQKIKAATKEADDIIKDLRQLREQKGADVKEHELIDKKKRLDDHYEAKSIKQNVQKQKYDKIVAGDEVKVLSYGQKGEVLEIVNDEEAIVQMGIIKMKLPIEDLEKKQKEKVKPTKMVTRQNRQTIKTELDLRGYRYEDALIELDQYLDQAVLSNYEQVYIIHGKGTGALQKGVQQHLKKHKSVSDFRGGMPSEGGFGVTVATLK</sequence>
<name>MUTS2_STAA3</name>
<protein>
    <recommendedName>
        <fullName evidence="1">Endonuclease MutS2</fullName>
        <ecNumber evidence="1">3.1.-.-</ecNumber>
    </recommendedName>
    <alternativeName>
        <fullName evidence="1">Ribosome-associated protein quality control-upstream factor</fullName>
        <shortName evidence="1">RQC-upstream factor</shortName>
        <shortName evidence="1">RqcU</shortName>
        <ecNumber evidence="1">3.6.4.-</ecNumber>
    </alternativeName>
</protein>
<dbReference type="EC" id="3.1.-.-" evidence="1"/>
<dbReference type="EC" id="3.6.4.-" evidence="1"/>
<dbReference type="EMBL" id="CP000255">
    <property type="protein sequence ID" value="ABD21894.1"/>
    <property type="molecule type" value="Genomic_DNA"/>
</dbReference>
<dbReference type="RefSeq" id="WP_001249285.1">
    <property type="nucleotide sequence ID" value="NZ_CP027476.1"/>
</dbReference>
<dbReference type="SMR" id="Q2FHT7"/>
<dbReference type="KEGG" id="saa:SAUSA300_1043"/>
<dbReference type="HOGENOM" id="CLU_011252_2_1_9"/>
<dbReference type="OMA" id="IHAIIND"/>
<dbReference type="Proteomes" id="UP000001939">
    <property type="component" value="Chromosome"/>
</dbReference>
<dbReference type="GO" id="GO:0005524">
    <property type="term" value="F:ATP binding"/>
    <property type="evidence" value="ECO:0007669"/>
    <property type="project" value="UniProtKB-UniRule"/>
</dbReference>
<dbReference type="GO" id="GO:0016887">
    <property type="term" value="F:ATP hydrolysis activity"/>
    <property type="evidence" value="ECO:0007669"/>
    <property type="project" value="InterPro"/>
</dbReference>
<dbReference type="GO" id="GO:0140664">
    <property type="term" value="F:ATP-dependent DNA damage sensor activity"/>
    <property type="evidence" value="ECO:0007669"/>
    <property type="project" value="InterPro"/>
</dbReference>
<dbReference type="GO" id="GO:0004519">
    <property type="term" value="F:endonuclease activity"/>
    <property type="evidence" value="ECO:0007669"/>
    <property type="project" value="UniProtKB-UniRule"/>
</dbReference>
<dbReference type="GO" id="GO:0030983">
    <property type="term" value="F:mismatched DNA binding"/>
    <property type="evidence" value="ECO:0007669"/>
    <property type="project" value="InterPro"/>
</dbReference>
<dbReference type="GO" id="GO:0043023">
    <property type="term" value="F:ribosomal large subunit binding"/>
    <property type="evidence" value="ECO:0007669"/>
    <property type="project" value="UniProtKB-UniRule"/>
</dbReference>
<dbReference type="GO" id="GO:0019843">
    <property type="term" value="F:rRNA binding"/>
    <property type="evidence" value="ECO:0007669"/>
    <property type="project" value="UniProtKB-UniRule"/>
</dbReference>
<dbReference type="GO" id="GO:0006298">
    <property type="term" value="P:mismatch repair"/>
    <property type="evidence" value="ECO:0007669"/>
    <property type="project" value="InterPro"/>
</dbReference>
<dbReference type="GO" id="GO:0045910">
    <property type="term" value="P:negative regulation of DNA recombination"/>
    <property type="evidence" value="ECO:0007669"/>
    <property type="project" value="InterPro"/>
</dbReference>
<dbReference type="GO" id="GO:0072344">
    <property type="term" value="P:rescue of stalled ribosome"/>
    <property type="evidence" value="ECO:0007669"/>
    <property type="project" value="UniProtKB-UniRule"/>
</dbReference>
<dbReference type="CDD" id="cd03280">
    <property type="entry name" value="ABC_MutS2"/>
    <property type="match status" value="1"/>
</dbReference>
<dbReference type="FunFam" id="3.30.1370.110:FF:000006">
    <property type="entry name" value="Endonuclease MutS2"/>
    <property type="match status" value="1"/>
</dbReference>
<dbReference type="FunFam" id="3.40.50.300:FF:000830">
    <property type="entry name" value="Endonuclease MutS2"/>
    <property type="match status" value="1"/>
</dbReference>
<dbReference type="Gene3D" id="3.30.1370.110">
    <property type="match status" value="1"/>
</dbReference>
<dbReference type="Gene3D" id="3.40.50.300">
    <property type="entry name" value="P-loop containing nucleotide triphosphate hydrolases"/>
    <property type="match status" value="1"/>
</dbReference>
<dbReference type="HAMAP" id="MF_00092">
    <property type="entry name" value="MutS2"/>
    <property type="match status" value="1"/>
</dbReference>
<dbReference type="InterPro" id="IPR000432">
    <property type="entry name" value="DNA_mismatch_repair_MutS_C"/>
</dbReference>
<dbReference type="InterPro" id="IPR007696">
    <property type="entry name" value="DNA_mismatch_repair_MutS_core"/>
</dbReference>
<dbReference type="InterPro" id="IPR036187">
    <property type="entry name" value="DNA_mismatch_repair_MutS_sf"/>
</dbReference>
<dbReference type="InterPro" id="IPR046893">
    <property type="entry name" value="MSSS"/>
</dbReference>
<dbReference type="InterPro" id="IPR045076">
    <property type="entry name" value="MutS"/>
</dbReference>
<dbReference type="InterPro" id="IPR005747">
    <property type="entry name" value="MutS2"/>
</dbReference>
<dbReference type="InterPro" id="IPR027417">
    <property type="entry name" value="P-loop_NTPase"/>
</dbReference>
<dbReference type="InterPro" id="IPR002625">
    <property type="entry name" value="Smr_dom"/>
</dbReference>
<dbReference type="InterPro" id="IPR036063">
    <property type="entry name" value="Smr_dom_sf"/>
</dbReference>
<dbReference type="NCBIfam" id="TIGR01069">
    <property type="entry name" value="mutS2"/>
    <property type="match status" value="1"/>
</dbReference>
<dbReference type="PANTHER" id="PTHR48466:SF2">
    <property type="entry name" value="OS10G0509000 PROTEIN"/>
    <property type="match status" value="1"/>
</dbReference>
<dbReference type="PANTHER" id="PTHR48466">
    <property type="entry name" value="OS10G0509000 PROTEIN-RELATED"/>
    <property type="match status" value="1"/>
</dbReference>
<dbReference type="Pfam" id="PF20297">
    <property type="entry name" value="MSSS"/>
    <property type="match status" value="1"/>
</dbReference>
<dbReference type="Pfam" id="PF00488">
    <property type="entry name" value="MutS_V"/>
    <property type="match status" value="1"/>
</dbReference>
<dbReference type="Pfam" id="PF01713">
    <property type="entry name" value="Smr"/>
    <property type="match status" value="1"/>
</dbReference>
<dbReference type="PIRSF" id="PIRSF005814">
    <property type="entry name" value="MutS_YshD"/>
    <property type="match status" value="1"/>
</dbReference>
<dbReference type="SMART" id="SM00534">
    <property type="entry name" value="MUTSac"/>
    <property type="match status" value="1"/>
</dbReference>
<dbReference type="SMART" id="SM00533">
    <property type="entry name" value="MUTSd"/>
    <property type="match status" value="1"/>
</dbReference>
<dbReference type="SMART" id="SM00463">
    <property type="entry name" value="SMR"/>
    <property type="match status" value="1"/>
</dbReference>
<dbReference type="SUPFAM" id="SSF48334">
    <property type="entry name" value="DNA repair protein MutS, domain III"/>
    <property type="match status" value="1"/>
</dbReference>
<dbReference type="SUPFAM" id="SSF52540">
    <property type="entry name" value="P-loop containing nucleoside triphosphate hydrolases"/>
    <property type="match status" value="1"/>
</dbReference>
<dbReference type="SUPFAM" id="SSF160443">
    <property type="entry name" value="SMR domain-like"/>
    <property type="match status" value="1"/>
</dbReference>
<dbReference type="PROSITE" id="PS00486">
    <property type="entry name" value="DNA_MISMATCH_REPAIR_2"/>
    <property type="match status" value="1"/>
</dbReference>
<dbReference type="PROSITE" id="PS50828">
    <property type="entry name" value="SMR"/>
    <property type="match status" value="1"/>
</dbReference>
<feature type="chain" id="PRO_1000093379" description="Endonuclease MutS2">
    <location>
        <begin position="1"/>
        <end position="782"/>
    </location>
</feature>
<feature type="domain" description="Smr" evidence="1">
    <location>
        <begin position="707"/>
        <end position="782"/>
    </location>
</feature>
<feature type="binding site" evidence="1">
    <location>
        <begin position="336"/>
        <end position="343"/>
    </location>
    <ligand>
        <name>ATP</name>
        <dbReference type="ChEBI" id="CHEBI:30616"/>
    </ligand>
</feature>
<evidence type="ECO:0000255" key="1">
    <source>
        <dbReference type="HAMAP-Rule" id="MF_00092"/>
    </source>
</evidence>
<accession>Q2FHT7</accession>
<comment type="function">
    <text evidence="1">Endonuclease that is involved in the suppression of homologous recombination and thus may have a key role in the control of bacterial genetic diversity.</text>
</comment>
<comment type="function">
    <text evidence="1">Acts as a ribosome collision sensor, splitting the ribosome into its 2 subunits. Detects stalled/collided 70S ribosomes which it binds and splits by an ATP-hydrolysis driven conformational change. Acts upstream of the ribosome quality control system (RQC), a ribosome-associated complex that mediates the extraction of incompletely synthesized nascent chains from stalled ribosomes and their subsequent degradation. Probably generates substrates for RQC.</text>
</comment>
<comment type="subunit">
    <text evidence="1">Homodimer. Binds to stalled ribosomes, contacting rRNA.</text>
</comment>
<comment type="similarity">
    <text evidence="1">Belongs to the DNA mismatch repair MutS family. MutS2 subfamily.</text>
</comment>
<proteinExistence type="inferred from homology"/>
<reference key="1">
    <citation type="journal article" date="2006" name="Lancet">
        <title>Complete genome sequence of USA300, an epidemic clone of community-acquired meticillin-resistant Staphylococcus aureus.</title>
        <authorList>
            <person name="Diep B.A."/>
            <person name="Gill S.R."/>
            <person name="Chang R.F."/>
            <person name="Phan T.H."/>
            <person name="Chen J.H."/>
            <person name="Davidson M.G."/>
            <person name="Lin F."/>
            <person name="Lin J."/>
            <person name="Carleton H.A."/>
            <person name="Mongodin E.F."/>
            <person name="Sensabaugh G.F."/>
            <person name="Perdreau-Remington F."/>
        </authorList>
    </citation>
    <scope>NUCLEOTIDE SEQUENCE [LARGE SCALE GENOMIC DNA]</scope>
    <source>
        <strain>USA300</strain>
    </source>
</reference>
<organism>
    <name type="scientific">Staphylococcus aureus (strain USA300)</name>
    <dbReference type="NCBI Taxonomy" id="367830"/>
    <lineage>
        <taxon>Bacteria</taxon>
        <taxon>Bacillati</taxon>
        <taxon>Bacillota</taxon>
        <taxon>Bacilli</taxon>
        <taxon>Bacillales</taxon>
        <taxon>Staphylococcaceae</taxon>
        <taxon>Staphylococcus</taxon>
    </lineage>
</organism>
<gene>
    <name evidence="1" type="primary">mutS2</name>
    <name evidence="1" type="synonym">rqcU</name>
    <name type="ordered locus">SAUSA300_1043</name>
</gene>
<keyword id="KW-0067">ATP-binding</keyword>
<keyword id="KW-0238">DNA-binding</keyword>
<keyword id="KW-0255">Endonuclease</keyword>
<keyword id="KW-0378">Hydrolase</keyword>
<keyword id="KW-0540">Nuclease</keyword>
<keyword id="KW-0547">Nucleotide-binding</keyword>
<keyword id="KW-0694">RNA-binding</keyword>
<keyword id="KW-0699">rRNA-binding</keyword>